<protein>
    <recommendedName>
        <fullName>Disease resistance protein RPP13</fullName>
    </recommendedName>
    <alternativeName>
        <fullName>Resistance to Peronospora parasitica protein 13</fullName>
    </alternativeName>
</protein>
<gene>
    <name type="primary">RPP13</name>
    <name type="ordered locus">At3g46530</name>
    <name type="ORF">F12A12.50</name>
</gene>
<comment type="function">
    <text evidence="3 4">Disease resistance protein. Resistance proteins guard the plant against pathogens that contain an appropriate avirulence protein via an indirect interaction with this avirulence protein. That triggers a defense system including the hypersensitive response, which restricts the pathogen growth. In contrast to other resistance proteins, it works independently of ESD1 and NSD1 proteins and does not require the accumulation of salicylic acid, suggesting the existence of an independent signaling pathway. The specificity to avirulence proteins differs in the different cultivars.</text>
</comment>
<comment type="domain">
    <text evidence="1">The LRR repeats probably act as specificity determinant of pathogen recognition.</text>
</comment>
<comment type="miscellaneous">
    <text>In cv. Nd-1, it confers resistance to Mask-9, Aswa1, Edco1, Emco5 and Goco5 loci from Hyaloperonospora parasitica. In cv. Columbia, it confers resistance to Wela3 locus from Hyaloperonospora parasitica. In cv. RLD, it confers resistance to all of these loci.</text>
</comment>
<comment type="similarity">
    <text evidence="5">Belongs to the disease resistance NB-LRR family. RPP13 subfamily.</text>
</comment>
<comment type="online information" name="NIB-LRRS">
    <link uri="http://niblrrs.ucdavis.edu"/>
    <text>Functional and comparative genomics of disease resistance gene homologs</text>
</comment>
<proteinExistence type="evidence at transcript level"/>
<name>RPP13_ARATH</name>
<feature type="chain" id="PRO_0000212725" description="Disease resistance protein RPP13">
    <location>
        <begin position="1"/>
        <end position="835"/>
    </location>
</feature>
<feature type="domain" description="NB-ARC">
    <location>
        <begin position="144"/>
        <end position="453"/>
    </location>
</feature>
<feature type="coiled-coil region" evidence="2">
    <location>
        <begin position="25"/>
        <end position="41"/>
    </location>
</feature>
<feature type="binding site" evidence="2">
    <location>
        <begin position="192"/>
        <end position="199"/>
    </location>
    <ligand>
        <name>ATP</name>
        <dbReference type="ChEBI" id="CHEBI:30616"/>
    </ligand>
</feature>
<feature type="sequence variant" description="In strain: cv. Nd-1.">
    <original>I</original>
    <variation>V</variation>
    <location>
        <position position="108"/>
    </location>
</feature>
<feature type="sequence variant" description="In strain: cv. Nd-1.">
    <original>R</original>
    <variation>K</variation>
    <location>
        <position position="113"/>
    </location>
</feature>
<feature type="sequence variant" description="In strain: cv. Nd-1.">
    <original>E</original>
    <variation>A</variation>
    <location>
        <position position="167"/>
    </location>
</feature>
<feature type="sequence variant" description="In strain: cv. Nd-1.">
    <original>E</original>
    <variation>D</variation>
    <location>
        <position position="181"/>
    </location>
</feature>
<feature type="sequence variant" description="In strain: cv. Nd-1.">
    <original>R</original>
    <variation>G</variation>
    <location>
        <position position="209"/>
    </location>
</feature>
<feature type="sequence variant" description="In strain: cv. Nd-1.">
    <original>E</original>
    <variation>R</variation>
    <location>
        <position position="213"/>
    </location>
</feature>
<feature type="sequence variant" description="In strain: cv. Nd-1.">
    <original>R</original>
    <variation>K</variation>
    <location>
        <position position="238"/>
    </location>
</feature>
<feature type="sequence variant" description="In strain: cv. Nd-1.">
    <original>K</original>
    <variation>M</variation>
    <location>
        <position position="253"/>
    </location>
</feature>
<feature type="sequence variant" description="In strain: cv. RLD.">
    <original>E</original>
    <variation>D</variation>
    <location>
        <position position="256"/>
    </location>
</feature>
<feature type="sequence variant" description="In strain: cv. Nd-1 and cv. RLD.">
    <original>Y</original>
    <variation>H</variation>
    <location>
        <position position="264"/>
    </location>
</feature>
<feature type="sequence variant" description="In strain: cv. Nd-1 and cv. RLD.">
    <original>D</original>
    <variation>E</variation>
    <location>
        <position position="286"/>
    </location>
</feature>
<feature type="sequence variant" description="In strain: cv. Nd-1.">
    <original>V</original>
    <variation>L</variation>
    <location>
        <position position="314"/>
    </location>
</feature>
<feature type="sequence variant" description="In strain: cv. RLD.">
    <original>K</original>
    <variation>N</variation>
    <location>
        <position position="346"/>
    </location>
</feature>
<feature type="sequence variant" description="In strain: cv. RLD.">
    <original>L</original>
    <variation>V</variation>
    <location>
        <position position="435"/>
    </location>
</feature>
<feature type="sequence variant" description="In strain: cv. Nd-1 and cv. RLD.">
    <original>H</original>
    <variation>R</variation>
    <location>
        <position position="440"/>
    </location>
</feature>
<feature type="sequence variant" description="In strain: cv. Nd-1.">
    <original>A</original>
    <variation>S</variation>
    <location>
        <position position="514"/>
    </location>
</feature>
<feature type="sequence variant" description="In strain: cv. Nd-1.">
    <original>E</original>
    <variation>Q</variation>
    <location>
        <position position="524"/>
    </location>
</feature>
<feature type="sequence variant" description="In strain: cv. Nd-1.">
    <original>H</original>
    <variation>N</variation>
    <location>
        <position position="527"/>
    </location>
</feature>
<feature type="sequence variant" description="In strain: cv. Nd-1.">
    <original>FKRYSSEKRK</original>
    <variation>IKRFAR</variation>
    <location>
        <begin position="530"/>
        <end position="539"/>
    </location>
</feature>
<feature type="sequence variant" description="In strain: cv. RLD.">
    <original>F</original>
    <variation>V</variation>
    <location>
        <position position="530"/>
    </location>
</feature>
<feature type="sequence variant" description="In strain: cv. RLD.">
    <original>Y</original>
    <variation>N</variation>
    <location>
        <position position="548"/>
    </location>
</feature>
<feature type="sequence variant" description="In strain: cv. RLD.">
    <original>EFDH</original>
    <variation>LDN</variation>
    <location>
        <begin position="551"/>
        <end position="554"/>
    </location>
</feature>
<feature type="sequence variant" description="In strain: cv. Nd-1.">
    <original>FDHLVGLDFET</original>
    <variation>LKFLVRLDVEK</variation>
    <location>
        <begin position="552"/>
        <end position="562"/>
    </location>
</feature>
<feature type="sequence variant" description="In strain: cv. RLD.">
    <original>L</original>
    <variation>P</variation>
    <location>
        <position position="558"/>
    </location>
</feature>
<feature type="sequence variant" description="In strain: cv. RLD.">
    <original>L</original>
    <variation>T</variation>
    <location>
        <position position="563"/>
    </location>
</feature>
<feature type="sequence variant" description="In strain: cv. Nd-1.">
    <original>FGSLWLPFKI</original>
    <variation>LEALLGPFAS</variation>
    <location>
        <begin position="571"/>
        <end position="580"/>
    </location>
</feature>
<feature type="sequence variant" description="In strain: cv. RLD.">
    <original>FGSLWLPF</original>
    <variation>VRRLGFPL</variation>
    <location>
        <begin position="571"/>
        <end position="578"/>
    </location>
</feature>
<feature type="sequence variant" description="In strain: cv. RLD.">
    <original>H</original>
    <variation>P</variation>
    <location>
        <position position="586"/>
    </location>
</feature>
<feature type="sequence variant" description="In strain: cv. Nd-1.">
    <original>GI</original>
    <variation>RF</variation>
    <location>
        <begin position="591"/>
        <end position="592"/>
    </location>
</feature>
<feature type="sequence variant" description="In strain: cv. RLD.">
    <original>GNSINDFDI</original>
    <variation>DYSFSDR</variation>
    <location>
        <begin position="594"/>
        <end position="602"/>
    </location>
</feature>
<feature type="sequence variant" description="In strain: cv. Nd-1.">
    <original>NSIND</original>
    <variation>FSLRV</variation>
    <location>
        <begin position="595"/>
        <end position="599"/>
    </location>
</feature>
<feature type="sequence variant" description="In strain: cv. Nd-1.">
    <original>L</original>
    <variation>S</variation>
    <location>
        <position position="609"/>
    </location>
</feature>
<feature type="sequence variant" description="In strain: cv. Nd-1.">
    <original>FVSDNYFIEE</original>
    <variation>DADHVCFIYD</variation>
    <location>
        <begin position="616"/>
        <end position="625"/>
    </location>
</feature>
<feature type="sequence variant" description="In strain: cv. RLD.">
    <original>FVSDNYFIEE</original>
    <variation>EVSTYSEYPIYD</variation>
    <location>
        <begin position="616"/>
        <end position="625"/>
    </location>
</feature>
<feature type="sequence variant" description="In strain: cv. Nd-1.">
    <original>L</original>
    <variation>F</variation>
    <location>
        <position position="632"/>
    </location>
</feature>
<feature type="sequence variant" description="In strain: cv. Nd-1.">
    <original>N</original>
    <variation>K</variation>
    <location>
        <position position="641"/>
    </location>
</feature>
<feature type="sequence variant" description="In strain: cv. RLD.">
    <original>N</original>
    <variation>Q</variation>
    <location>
        <position position="641"/>
    </location>
</feature>
<feature type="sequence variant" description="In strain: cv. Nd-1 and cv. RLD.">
    <original>FGG</original>
    <variation>VGE</variation>
    <location>
        <begin position="643"/>
        <end position="645"/>
    </location>
</feature>
<feature type="sequence variant" description="In strain: cv. Nd-1 and cv. RLD.">
    <original>V</original>
    <variation>A</variation>
    <location>
        <position position="651"/>
    </location>
</feature>
<feature type="sequence variant" description="In strain: cv. Nd-1 and cv. RLD.">
    <original>T</original>
    <variation>R</variation>
    <location>
        <position position="658"/>
    </location>
</feature>
<feature type="sequence variant" description="In strain: cv. RLD.">
    <original>S</original>
    <variation>F</variation>
    <location>
        <position position="659"/>
    </location>
</feature>
<feature type="sequence variant" description="In strain: cv. Nd-1 and cv. RLD.">
    <original>F</original>
    <variation>S</variation>
    <location>
        <position position="662"/>
    </location>
</feature>
<feature type="sequence variant" description="In strain: cv. Nd-1.">
    <original>N</original>
    <variation>S</variation>
    <location>
        <position position="666"/>
    </location>
</feature>
<feature type="sequence variant" description="In strain: cv. Nd-1.">
    <original>P</original>
    <variation>H</variation>
    <location>
        <position position="670"/>
    </location>
</feature>
<feature type="sequence variant" description="In strain: cv. Nd-1 and cv. RLD.">
    <original>GISEM</original>
    <variation>EIYEDY</variation>
    <location>
        <begin position="680"/>
        <end position="684"/>
    </location>
</feature>
<feature type="sequence variant" description="In strain: cv. RLD.">
    <original>SRSKE</original>
    <variation>DEDFD</variation>
    <location>
        <begin position="685"/>
        <end position="689"/>
    </location>
</feature>
<feature type="sequence variant" description="In strain: cv. Nd-1.">
    <original>SR</original>
    <variation>NK</variation>
    <location>
        <begin position="685"/>
        <end position="686"/>
    </location>
</feature>
<feature type="sequence variant" description="In strain: cv. Nd-1 and cv. RLD.">
    <original>H</original>
    <variation>T</variation>
    <location>
        <position position="693"/>
    </location>
</feature>
<feature type="sequence variant" description="In strain: cv. Nd-1 and cv. RLD.">
    <original>E</original>
    <variation>R</variation>
    <location>
        <position position="703"/>
    </location>
</feature>
<feature type="sequence variant" description="In strain: cv. RLD.">
    <original>ATPTEVHLS</original>
    <variation>YYLR</variation>
    <location>
        <begin position="711"/>
        <end position="719"/>
    </location>
</feature>
<feature type="sequence variant" description="In strain: cv. Nd-1.">
    <original>ATPTEVH</original>
    <variation>VADRRY</variation>
    <location>
        <begin position="711"/>
        <end position="717"/>
    </location>
</feature>
<feature type="sequence variant" description="In strain: cv. RLD.">
    <original>M</original>
    <variation>T</variation>
    <location>
        <position position="729"/>
    </location>
</feature>
<feature type="sequence variant" description="In strain: cv. RLD.">
    <original>R</original>
    <variation>L</variation>
    <location>
        <position position="734"/>
    </location>
</feature>
<feature type="sequence variant" description="In strain: cv. Nd-1.">
    <original>R</original>
    <variation>P</variation>
    <location>
        <position position="734"/>
    </location>
</feature>
<feature type="sequence variant" description="In strain: cv. RLD.">
    <original>V</original>
    <variation>E</variation>
    <location>
        <position position="742"/>
    </location>
</feature>
<feature type="sequence variant" description="In strain: cv. RLD.">
    <original>P</original>
    <variation>T</variation>
    <location>
        <position position="750"/>
    </location>
</feature>
<feature type="sequence variant" description="In strain: cv. Nd-1.">
    <original>LLSCNYS</original>
    <variation>FENCDYWG</variation>
    <location>
        <begin position="765"/>
        <end position="771"/>
    </location>
</feature>
<feature type="sequence variant" description="In strain: cv. RLD.">
    <original>S</original>
    <variation>H</variation>
    <location>
        <position position="767"/>
    </location>
</feature>
<feature type="sequence variant" description="In strain: cv. RLD.">
    <original>G</original>
    <variation>GG</variation>
    <location>
        <position position="772"/>
    </location>
</feature>
<feature type="sequence variant" description="In strain: cv. Nd-1.">
    <original>DLLMRS</original>
    <variation>KLFINR</variation>
    <location>
        <begin position="788"/>
        <end position="793"/>
    </location>
</feature>
<feature type="sequence variant" description="In strain: cv. RLD.">
    <original>DLLMR</original>
    <variation>QIFIHN</variation>
    <location>
        <begin position="788"/>
        <end position="792"/>
    </location>
</feature>
<feature type="sequence variant" description="In strain: cv. Nd-1.">
    <original>EISVSKRETKLII</original>
    <variation>VVQTDNSKPIASV</variation>
    <location>
        <begin position="811"/>
        <end position="823"/>
    </location>
</feature>
<feature type="sequence variant" description="In strain: cv. RLD.">
    <original>EISVSKRET</original>
    <variation>KITFKEVK</variation>
    <location>
        <begin position="811"/>
        <end position="819"/>
    </location>
</feature>
<feature type="sequence variant" description="In strain: cv. RLD.">
    <original>FGQIYC</original>
    <variation>CMSYES</variation>
    <location>
        <begin position="830"/>
        <end position="835"/>
    </location>
</feature>
<reference key="1">
    <citation type="journal article" date="2000" name="Plant J.">
        <title>RPP13 is a simple locus in Arabidopsis thaliana for alleles that specify downy mildew resistance to different avirulence determinants in Peronospora parasitica.</title>
        <authorList>
            <person name="Bittner-Eddy P.D."/>
            <person name="Crute I.R."/>
            <person name="Holub E.B."/>
            <person name="Beynon J.L."/>
        </authorList>
    </citation>
    <scope>NUCLEOTIDE SEQUENCE [GENOMIC DNA]</scope>
    <scope>FUNCTION</scope>
    <scope>VARIANTS</scope>
    <source>
        <strain>cv. Columbia</strain>
        <strain>cv. Nd-1</strain>
        <strain>cv. RLD</strain>
    </source>
</reference>
<reference key="2">
    <citation type="journal article" date="2000" name="Nature">
        <title>Sequence and analysis of chromosome 3 of the plant Arabidopsis thaliana.</title>
        <authorList>
            <person name="Salanoubat M."/>
            <person name="Lemcke K."/>
            <person name="Rieger M."/>
            <person name="Ansorge W."/>
            <person name="Unseld M."/>
            <person name="Fartmann B."/>
            <person name="Valle G."/>
            <person name="Bloecker H."/>
            <person name="Perez-Alonso M."/>
            <person name="Obermaier B."/>
            <person name="Delseny M."/>
            <person name="Boutry M."/>
            <person name="Grivell L.A."/>
            <person name="Mache R."/>
            <person name="Puigdomenech P."/>
            <person name="De Simone V."/>
            <person name="Choisne N."/>
            <person name="Artiguenave F."/>
            <person name="Robert C."/>
            <person name="Brottier P."/>
            <person name="Wincker P."/>
            <person name="Cattolico L."/>
            <person name="Weissenbach J."/>
            <person name="Saurin W."/>
            <person name="Quetier F."/>
            <person name="Schaefer M."/>
            <person name="Mueller-Auer S."/>
            <person name="Gabel C."/>
            <person name="Fuchs M."/>
            <person name="Benes V."/>
            <person name="Wurmbach E."/>
            <person name="Drzonek H."/>
            <person name="Erfle H."/>
            <person name="Jordan N."/>
            <person name="Bangert S."/>
            <person name="Wiedelmann R."/>
            <person name="Kranz H."/>
            <person name="Voss H."/>
            <person name="Holland R."/>
            <person name="Brandt P."/>
            <person name="Nyakatura G."/>
            <person name="Vezzi A."/>
            <person name="D'Angelo M."/>
            <person name="Pallavicini A."/>
            <person name="Toppo S."/>
            <person name="Simionati B."/>
            <person name="Conrad A."/>
            <person name="Hornischer K."/>
            <person name="Kauer G."/>
            <person name="Loehnert T.-H."/>
            <person name="Nordsiek G."/>
            <person name="Reichelt J."/>
            <person name="Scharfe M."/>
            <person name="Schoen O."/>
            <person name="Bargues M."/>
            <person name="Terol J."/>
            <person name="Climent J."/>
            <person name="Navarro P."/>
            <person name="Collado C."/>
            <person name="Perez-Perez A."/>
            <person name="Ottenwaelder B."/>
            <person name="Duchemin D."/>
            <person name="Cooke R."/>
            <person name="Laudie M."/>
            <person name="Berger-Llauro C."/>
            <person name="Purnelle B."/>
            <person name="Masuy D."/>
            <person name="de Haan M."/>
            <person name="Maarse A.C."/>
            <person name="Alcaraz J.-P."/>
            <person name="Cottet A."/>
            <person name="Casacuberta E."/>
            <person name="Monfort A."/>
            <person name="Argiriou A."/>
            <person name="Flores M."/>
            <person name="Liguori R."/>
            <person name="Vitale D."/>
            <person name="Mannhaupt G."/>
            <person name="Haase D."/>
            <person name="Schoof H."/>
            <person name="Rudd S."/>
            <person name="Zaccaria P."/>
            <person name="Mewes H.-W."/>
            <person name="Mayer K.F.X."/>
            <person name="Kaul S."/>
            <person name="Town C.D."/>
            <person name="Koo H.L."/>
            <person name="Tallon L.J."/>
            <person name="Jenkins J."/>
            <person name="Rooney T."/>
            <person name="Rizzo M."/>
            <person name="Walts A."/>
            <person name="Utterback T."/>
            <person name="Fujii C.Y."/>
            <person name="Shea T.P."/>
            <person name="Creasy T.H."/>
            <person name="Haas B."/>
            <person name="Maiti R."/>
            <person name="Wu D."/>
            <person name="Peterson J."/>
            <person name="Van Aken S."/>
            <person name="Pai G."/>
            <person name="Militscher J."/>
            <person name="Sellers P."/>
            <person name="Gill J.E."/>
            <person name="Feldblyum T.V."/>
            <person name="Preuss D."/>
            <person name="Lin X."/>
            <person name="Nierman W.C."/>
            <person name="Salzberg S.L."/>
            <person name="White O."/>
            <person name="Venter J.C."/>
            <person name="Fraser C.M."/>
            <person name="Kaneko T."/>
            <person name="Nakamura Y."/>
            <person name="Sato S."/>
            <person name="Kato T."/>
            <person name="Asamizu E."/>
            <person name="Sasamoto S."/>
            <person name="Kimura T."/>
            <person name="Idesawa K."/>
            <person name="Kawashima K."/>
            <person name="Kishida Y."/>
            <person name="Kiyokawa C."/>
            <person name="Kohara M."/>
            <person name="Matsumoto M."/>
            <person name="Matsuno A."/>
            <person name="Muraki A."/>
            <person name="Nakayama S."/>
            <person name="Nakazaki N."/>
            <person name="Shinpo S."/>
            <person name="Takeuchi C."/>
            <person name="Wada T."/>
            <person name="Watanabe A."/>
            <person name="Yamada M."/>
            <person name="Yasuda M."/>
            <person name="Tabata S."/>
        </authorList>
    </citation>
    <scope>NUCLEOTIDE SEQUENCE [LARGE SCALE GENOMIC DNA]</scope>
    <source>
        <strain>cv. Columbia</strain>
    </source>
</reference>
<reference key="3">
    <citation type="journal article" date="2017" name="Plant J.">
        <title>Araport11: a complete reannotation of the Arabidopsis thaliana reference genome.</title>
        <authorList>
            <person name="Cheng C.Y."/>
            <person name="Krishnakumar V."/>
            <person name="Chan A.P."/>
            <person name="Thibaud-Nissen F."/>
            <person name="Schobel S."/>
            <person name="Town C.D."/>
        </authorList>
    </citation>
    <scope>GENOME REANNOTATION</scope>
    <source>
        <strain>cv. Columbia</strain>
    </source>
</reference>
<reference key="4">
    <citation type="journal article" date="2003" name="Science">
        <title>Empirical analysis of transcriptional activity in the Arabidopsis genome.</title>
        <authorList>
            <person name="Yamada K."/>
            <person name="Lim J."/>
            <person name="Dale J.M."/>
            <person name="Chen H."/>
            <person name="Shinn P."/>
            <person name="Palm C.J."/>
            <person name="Southwick A.M."/>
            <person name="Wu H.C."/>
            <person name="Kim C.J."/>
            <person name="Nguyen M."/>
            <person name="Pham P.K."/>
            <person name="Cheuk R.F."/>
            <person name="Karlin-Newmann G."/>
            <person name="Liu S.X."/>
            <person name="Lam B."/>
            <person name="Sakano H."/>
            <person name="Wu T."/>
            <person name="Yu G."/>
            <person name="Miranda M."/>
            <person name="Quach H.L."/>
            <person name="Tripp M."/>
            <person name="Chang C.H."/>
            <person name="Lee J.M."/>
            <person name="Toriumi M.J."/>
            <person name="Chan M.M."/>
            <person name="Tang C.C."/>
            <person name="Onodera C.S."/>
            <person name="Deng J.M."/>
            <person name="Akiyama K."/>
            <person name="Ansari Y."/>
            <person name="Arakawa T."/>
            <person name="Banh J."/>
            <person name="Banno F."/>
            <person name="Bowser L."/>
            <person name="Brooks S.Y."/>
            <person name="Carninci P."/>
            <person name="Chao Q."/>
            <person name="Choy N."/>
            <person name="Enju A."/>
            <person name="Goldsmith A.D."/>
            <person name="Gurjal M."/>
            <person name="Hansen N.F."/>
            <person name="Hayashizaki Y."/>
            <person name="Johnson-Hopson C."/>
            <person name="Hsuan V.W."/>
            <person name="Iida K."/>
            <person name="Karnes M."/>
            <person name="Khan S."/>
            <person name="Koesema E."/>
            <person name="Ishida J."/>
            <person name="Jiang P.X."/>
            <person name="Jones T."/>
            <person name="Kawai J."/>
            <person name="Kamiya A."/>
            <person name="Meyers C."/>
            <person name="Nakajima M."/>
            <person name="Narusaka M."/>
            <person name="Seki M."/>
            <person name="Sakurai T."/>
            <person name="Satou M."/>
            <person name="Tamse R."/>
            <person name="Vaysberg M."/>
            <person name="Wallender E.K."/>
            <person name="Wong C."/>
            <person name="Yamamura Y."/>
            <person name="Yuan S."/>
            <person name="Shinozaki K."/>
            <person name="Davis R.W."/>
            <person name="Theologis A."/>
            <person name="Ecker J.R."/>
        </authorList>
    </citation>
    <scope>NUCLEOTIDE SEQUENCE [LARGE SCALE MRNA]</scope>
    <source>
        <strain>cv. Columbia</strain>
    </source>
</reference>
<reference key="5">
    <citation type="journal article" date="2001" name="Mol. Plant Microbe Interact.">
        <title>The Arabidopsis downy mildew resistance gene, RPP13-Nd, functions independently of NDR1 and EDS1 and does not require the accumulation of salicylic acid.</title>
        <authorList>
            <person name="Bittner-Eddy P.D."/>
            <person name="Beynon J.L."/>
        </authorList>
    </citation>
    <scope>FUNCTION</scope>
</reference>
<evidence type="ECO:0000250" key="1"/>
<evidence type="ECO:0000255" key="2"/>
<evidence type="ECO:0000269" key="3">
    <source>
    </source>
</evidence>
<evidence type="ECO:0000269" key="4">
    <source>
    </source>
</evidence>
<evidence type="ECO:0000305" key="5"/>
<sequence>MVDAITEFVVGKIGNYLIEEASMFMAVKEDLEELKTELTCIHGYLKDVEAREREDEVSKEWSKLVLDFAYDVEDVLDTYHLKLEERSQRRGLRRLTNKIGRKMDAYSIVDDIRILKRRILDITRKRETYGIGGLKEPQGGGNTSSLRVRQLRRARSVDQEEVVVGLEDDAKILLEKLLDYEEKNRFIISIFGMGGLGKTALARKLYNSRDVKERFEYRAWTYVSQEYKTGDILMRIIRSLGMTSGEELEKIRKFAEEELEVYLYGLLEGKKYLVVVDDIWEREAWDSLKRALPCNHEGSRVIITTRIKAVAEGVDGRFYAHKLRFLTFEESWELFEQRAFRNIQRKDEDLLKTGKEMVQKCRGLPLCIVVLAGLLSRKTPSEWNDVCNSLWRRLKDDSIHVAPIVFDLSFKELRHESKLCFLYLSIFPEDYEIDLEKLIHLLVAEGFIQGDEEMMMEDVARYYIEELIDRSLLEAVRRERGKVMSCRIHDLLRDVAIKKSKELNFVNVYNDHVAQHSSTTCRREVVHHQFKRYSSEKRKNKRMRSFLYFGEFDHLVGLDFETLKLLRVLDFGSLWLPFKINGDLIHLRYLGIDGNSINDFDIAAIISKLRFLQTLFVSDNYFIEETIDLRKLTSLRHVIGNFFGGLLIGDVANLQTLTSISFDSWNKLKPELLINLRDLGISEMSRSKERRVHVSWASLTKLESLRVLKLATPTEVHLSLESEEAVRSMDVISRSLESVTLVGITFEEDPMPFLQKMPRLEDLILLSCNYSGKMSVSEQGFGRLRKLDLLMRSLDELQIEEEAMPNLIELEISVSKRETKLIIPNRLRAFGQIYC</sequence>
<accession>Q9M667</accession>
<accession>Q9M668</accession>
<accession>Q9SNC5</accession>
<dbReference type="EMBL" id="AF209730">
    <property type="protein sequence ID" value="AAF42830.1"/>
    <property type="molecule type" value="Genomic_DNA"/>
</dbReference>
<dbReference type="EMBL" id="AF209731">
    <property type="protein sequence ID" value="AAF42831.1"/>
    <property type="molecule type" value="Genomic_DNA"/>
</dbReference>
<dbReference type="EMBL" id="AF209732">
    <property type="protein sequence ID" value="AAF42832.1"/>
    <property type="molecule type" value="Genomic_DNA"/>
</dbReference>
<dbReference type="EMBL" id="AL133314">
    <property type="protein sequence ID" value="CAB62323.1"/>
    <property type="molecule type" value="Genomic_DNA"/>
</dbReference>
<dbReference type="EMBL" id="CP002686">
    <property type="protein sequence ID" value="AEE78169.1"/>
    <property type="molecule type" value="Genomic_DNA"/>
</dbReference>
<dbReference type="EMBL" id="AY037179">
    <property type="protein sequence ID" value="AAK59764.1"/>
    <property type="molecule type" value="mRNA"/>
</dbReference>
<dbReference type="EMBL" id="BT002246">
    <property type="protein sequence ID" value="AAN72257.1"/>
    <property type="molecule type" value="mRNA"/>
</dbReference>
<dbReference type="PIR" id="T45590">
    <property type="entry name" value="T45590"/>
</dbReference>
<dbReference type="PIR" id="T51185">
    <property type="entry name" value="T51185"/>
</dbReference>
<dbReference type="PIR" id="T51186">
    <property type="entry name" value="T51186"/>
</dbReference>
<dbReference type="RefSeq" id="NP_190237.1">
    <property type="nucleotide sequence ID" value="NM_114520.3"/>
</dbReference>
<dbReference type="SMR" id="Q9M667"/>
<dbReference type="BioGRID" id="9126">
    <property type="interactions" value="1"/>
</dbReference>
<dbReference type="FunCoup" id="Q9M667">
    <property type="interactions" value="14"/>
</dbReference>
<dbReference type="STRING" id="3702.Q9M667"/>
<dbReference type="iPTMnet" id="Q9M667"/>
<dbReference type="PaxDb" id="3702-AT3G46530.1"/>
<dbReference type="ProteomicsDB" id="228078"/>
<dbReference type="EnsemblPlants" id="AT3G46530.1">
    <property type="protein sequence ID" value="AT3G46530.1"/>
    <property type="gene ID" value="AT3G46530"/>
</dbReference>
<dbReference type="GeneID" id="823806"/>
<dbReference type="Gramene" id="AT3G46530.1">
    <property type="protein sequence ID" value="AT3G46530.1"/>
    <property type="gene ID" value="AT3G46530"/>
</dbReference>
<dbReference type="KEGG" id="ath:AT3G46530"/>
<dbReference type="Araport" id="AT3G46530"/>
<dbReference type="TAIR" id="AT3G46530">
    <property type="gene designation" value="RPP13"/>
</dbReference>
<dbReference type="eggNOG" id="KOG4658">
    <property type="taxonomic scope" value="Eukaryota"/>
</dbReference>
<dbReference type="HOGENOM" id="CLU_000837_25_4_1"/>
<dbReference type="InParanoid" id="Q9M667"/>
<dbReference type="OMA" id="VKSEFRH"/>
<dbReference type="PhylomeDB" id="Q9M667"/>
<dbReference type="PRO" id="PR:Q9M667"/>
<dbReference type="Proteomes" id="UP000006548">
    <property type="component" value="Chromosome 3"/>
</dbReference>
<dbReference type="ExpressionAtlas" id="Q9M667">
    <property type="expression patterns" value="baseline and differential"/>
</dbReference>
<dbReference type="GO" id="GO:0005737">
    <property type="term" value="C:cytoplasm"/>
    <property type="evidence" value="ECO:0000304"/>
    <property type="project" value="TAIR"/>
</dbReference>
<dbReference type="GO" id="GO:0043531">
    <property type="term" value="F:ADP binding"/>
    <property type="evidence" value="ECO:0007669"/>
    <property type="project" value="InterPro"/>
</dbReference>
<dbReference type="GO" id="GO:0005524">
    <property type="term" value="F:ATP binding"/>
    <property type="evidence" value="ECO:0007669"/>
    <property type="project" value="UniProtKB-KW"/>
</dbReference>
<dbReference type="GO" id="GO:0098542">
    <property type="term" value="P:defense response to other organism"/>
    <property type="evidence" value="ECO:0000315"/>
    <property type="project" value="TAIR"/>
</dbReference>
<dbReference type="GO" id="GO:0009626">
    <property type="term" value="P:plant-type hypersensitive response"/>
    <property type="evidence" value="ECO:0000315"/>
    <property type="project" value="TAIR"/>
</dbReference>
<dbReference type="CDD" id="cd14798">
    <property type="entry name" value="RX-CC_like"/>
    <property type="match status" value="1"/>
</dbReference>
<dbReference type="FunFam" id="3.40.50.300:FF:001091">
    <property type="entry name" value="Probable disease resistance protein At1g61300"/>
    <property type="match status" value="1"/>
</dbReference>
<dbReference type="FunFam" id="1.10.10.10:FF:000322">
    <property type="entry name" value="Probable disease resistance protein At1g63360"/>
    <property type="match status" value="1"/>
</dbReference>
<dbReference type="FunFam" id="1.10.8.430:FF:000003">
    <property type="entry name" value="Probable disease resistance protein At5g66910"/>
    <property type="match status" value="1"/>
</dbReference>
<dbReference type="Gene3D" id="1.20.5.4130">
    <property type="match status" value="1"/>
</dbReference>
<dbReference type="Gene3D" id="1.10.8.430">
    <property type="entry name" value="Helical domain of apoptotic protease-activating factors"/>
    <property type="match status" value="1"/>
</dbReference>
<dbReference type="Gene3D" id="3.40.50.300">
    <property type="entry name" value="P-loop containing nucleotide triphosphate hydrolases"/>
    <property type="match status" value="1"/>
</dbReference>
<dbReference type="Gene3D" id="3.80.10.10">
    <property type="entry name" value="Ribonuclease Inhibitor"/>
    <property type="match status" value="1"/>
</dbReference>
<dbReference type="Gene3D" id="1.10.10.10">
    <property type="entry name" value="Winged helix-like DNA-binding domain superfamily/Winged helix DNA-binding domain"/>
    <property type="match status" value="1"/>
</dbReference>
<dbReference type="InterPro" id="IPR042197">
    <property type="entry name" value="Apaf_helical"/>
</dbReference>
<dbReference type="InterPro" id="IPR044974">
    <property type="entry name" value="Disease_R_plants"/>
</dbReference>
<dbReference type="InterPro" id="IPR032675">
    <property type="entry name" value="LRR_dom_sf"/>
</dbReference>
<dbReference type="InterPro" id="IPR055414">
    <property type="entry name" value="LRR_R13L4/SHOC2-like"/>
</dbReference>
<dbReference type="InterPro" id="IPR002182">
    <property type="entry name" value="NB-ARC"/>
</dbReference>
<dbReference type="InterPro" id="IPR027417">
    <property type="entry name" value="P-loop_NTPase"/>
</dbReference>
<dbReference type="InterPro" id="IPR038005">
    <property type="entry name" value="RX-like_CC"/>
</dbReference>
<dbReference type="InterPro" id="IPR041118">
    <property type="entry name" value="Rx_N"/>
</dbReference>
<dbReference type="InterPro" id="IPR036388">
    <property type="entry name" value="WH-like_DNA-bd_sf"/>
</dbReference>
<dbReference type="PANTHER" id="PTHR23155">
    <property type="entry name" value="DISEASE RESISTANCE PROTEIN RP"/>
    <property type="match status" value="1"/>
</dbReference>
<dbReference type="PANTHER" id="PTHR23155:SF1193">
    <property type="entry name" value="DISEASE RESISTANCE PROTEIN RPP13-RELATED"/>
    <property type="match status" value="1"/>
</dbReference>
<dbReference type="Pfam" id="PF23598">
    <property type="entry name" value="LRR_14"/>
    <property type="match status" value="1"/>
</dbReference>
<dbReference type="Pfam" id="PF00931">
    <property type="entry name" value="NB-ARC"/>
    <property type="match status" value="1"/>
</dbReference>
<dbReference type="Pfam" id="PF18052">
    <property type="entry name" value="Rx_N"/>
    <property type="match status" value="1"/>
</dbReference>
<dbReference type="Pfam" id="PF23559">
    <property type="entry name" value="WH_DRP"/>
    <property type="match status" value="1"/>
</dbReference>
<dbReference type="PRINTS" id="PR00364">
    <property type="entry name" value="DISEASERSIST"/>
</dbReference>
<dbReference type="SUPFAM" id="SSF52058">
    <property type="entry name" value="L domain-like"/>
    <property type="match status" value="1"/>
</dbReference>
<dbReference type="SUPFAM" id="SSF52540">
    <property type="entry name" value="P-loop containing nucleoside triphosphate hydrolases"/>
    <property type="match status" value="1"/>
</dbReference>
<organism>
    <name type="scientific">Arabidopsis thaliana</name>
    <name type="common">Mouse-ear cress</name>
    <dbReference type="NCBI Taxonomy" id="3702"/>
    <lineage>
        <taxon>Eukaryota</taxon>
        <taxon>Viridiplantae</taxon>
        <taxon>Streptophyta</taxon>
        <taxon>Embryophyta</taxon>
        <taxon>Tracheophyta</taxon>
        <taxon>Spermatophyta</taxon>
        <taxon>Magnoliopsida</taxon>
        <taxon>eudicotyledons</taxon>
        <taxon>Gunneridae</taxon>
        <taxon>Pentapetalae</taxon>
        <taxon>rosids</taxon>
        <taxon>malvids</taxon>
        <taxon>Brassicales</taxon>
        <taxon>Brassicaceae</taxon>
        <taxon>Camelineae</taxon>
        <taxon>Arabidopsis</taxon>
    </lineage>
</organism>
<keyword id="KW-0067">ATP-binding</keyword>
<keyword id="KW-0175">Coiled coil</keyword>
<keyword id="KW-0381">Hypersensitive response</keyword>
<keyword id="KW-0547">Nucleotide-binding</keyword>
<keyword id="KW-0611">Plant defense</keyword>
<keyword id="KW-1185">Reference proteome</keyword>
<keyword id="KW-0677">Repeat</keyword>